<protein>
    <recommendedName>
        <fullName evidence="4">Brevinin-2SN1</fullName>
    </recommendedName>
</protein>
<keyword id="KW-0878">Amphibian defense peptide</keyword>
<keyword id="KW-0044">Antibiotic</keyword>
<keyword id="KW-0929">Antimicrobial</keyword>
<keyword id="KW-0165">Cleavage on pair of basic residues</keyword>
<keyword id="KW-0204">Cytolysis</keyword>
<keyword id="KW-0903">Direct protein sequencing</keyword>
<keyword id="KW-1015">Disulfide bond</keyword>
<keyword id="KW-0295">Fungicide</keyword>
<keyword id="KW-0354">Hemolysis</keyword>
<keyword id="KW-0964">Secreted</keyword>
<keyword id="KW-0732">Signal</keyword>
<reference evidence="6" key="1">
    <citation type="journal article" date="2013" name="Biochimie">
        <title>Identification of multiple antimicrobial peptides from the skin of fine-spined frog, Hylarana spinulosa (Ranidae).</title>
        <authorList>
            <person name="Yang X."/>
            <person name="Hu Y."/>
            <person name="Xu S."/>
            <person name="Hu Y."/>
            <person name="Meng H."/>
            <person name="Guo C."/>
            <person name="Liu Y."/>
            <person name="Liu J."/>
            <person name="Yu Z."/>
            <person name="Wang H."/>
        </authorList>
    </citation>
    <scope>NUCLEOTIDE SEQUENCE [MRNA]</scope>
    <scope>PROTEIN SEQUENCE OF 43-75</scope>
    <scope>FUNCTION</scope>
    <scope>SYNTHESIS</scope>
    <scope>IDENTIFICATION BY MASS SPECTROMETRY</scope>
    <source>
        <tissue evidence="4">Skin</tissue>
    </source>
</reference>
<organism evidence="4">
    <name type="scientific">Sylvirana spinulosa</name>
    <name type="common">Fine-spined frog</name>
    <name type="synonym">Hylarana spinulosa</name>
    <dbReference type="NCBI Taxonomy" id="369515"/>
    <lineage>
        <taxon>Eukaryota</taxon>
        <taxon>Metazoa</taxon>
        <taxon>Chordata</taxon>
        <taxon>Craniata</taxon>
        <taxon>Vertebrata</taxon>
        <taxon>Euteleostomi</taxon>
        <taxon>Amphibia</taxon>
        <taxon>Batrachia</taxon>
        <taxon>Anura</taxon>
        <taxon>Neobatrachia</taxon>
        <taxon>Ranoidea</taxon>
        <taxon>Ranidae</taxon>
        <taxon>Sylvirana</taxon>
    </lineage>
</organism>
<feature type="signal peptide" evidence="2">
    <location>
        <begin position="1"/>
        <end position="22"/>
    </location>
</feature>
<feature type="propeptide" id="PRO_0000439772" description="Removed in mature form" evidence="5">
    <location>
        <begin position="23"/>
        <end position="40"/>
    </location>
</feature>
<feature type="peptide" id="PRO_0000439773" description="Brevinin-2SN1" evidence="3">
    <location>
        <begin position="43"/>
        <end position="75"/>
    </location>
</feature>
<feature type="disulfide bond" evidence="1">
    <location>
        <begin position="69"/>
        <end position="75"/>
    </location>
</feature>
<dbReference type="EMBL" id="HQ735150">
    <property type="protein sequence ID" value="ADV36173.1"/>
    <property type="molecule type" value="mRNA"/>
</dbReference>
<dbReference type="GO" id="GO:0005576">
    <property type="term" value="C:extracellular region"/>
    <property type="evidence" value="ECO:0007669"/>
    <property type="project" value="UniProtKB-SubCell"/>
</dbReference>
<dbReference type="GO" id="GO:0050832">
    <property type="term" value="P:defense response to fungus"/>
    <property type="evidence" value="ECO:0000314"/>
    <property type="project" value="UniProtKB"/>
</dbReference>
<dbReference type="GO" id="GO:0050829">
    <property type="term" value="P:defense response to Gram-negative bacterium"/>
    <property type="evidence" value="ECO:0000314"/>
    <property type="project" value="UniProtKB"/>
</dbReference>
<dbReference type="GO" id="GO:0050830">
    <property type="term" value="P:defense response to Gram-positive bacterium"/>
    <property type="evidence" value="ECO:0000314"/>
    <property type="project" value="UniProtKB"/>
</dbReference>
<dbReference type="GO" id="GO:0044179">
    <property type="term" value="P:hemolysis in another organism"/>
    <property type="evidence" value="ECO:0000314"/>
    <property type="project" value="UniProtKB"/>
</dbReference>
<dbReference type="InterPro" id="IPR012521">
    <property type="entry name" value="Antimicrobial_frog_2"/>
</dbReference>
<dbReference type="InterPro" id="IPR004275">
    <property type="entry name" value="Frog_antimicrobial_propeptide"/>
</dbReference>
<dbReference type="Pfam" id="PF08023">
    <property type="entry name" value="Antimicrobial_2"/>
    <property type="match status" value="1"/>
</dbReference>
<dbReference type="Pfam" id="PF03032">
    <property type="entry name" value="FSAP_sig_propep"/>
    <property type="match status" value="1"/>
</dbReference>
<sequence length="75" mass="8374">MFTMKKPLLFLFFLGTISLSFCEEERGADEDDEVEMTEEEKRGLRDKIKNVAIDVAKGAGTGVLKALLCQLDKSC</sequence>
<evidence type="ECO:0000250" key="1">
    <source>
        <dbReference type="UniProtKB" id="P80398"/>
    </source>
</evidence>
<evidence type="ECO:0000255" key="2"/>
<evidence type="ECO:0000269" key="3">
    <source>
    </source>
</evidence>
<evidence type="ECO:0000303" key="4">
    <source>
    </source>
</evidence>
<evidence type="ECO:0000305" key="5">
    <source>
    </source>
</evidence>
<evidence type="ECO:0000312" key="6">
    <source>
        <dbReference type="EMBL" id="ADV36173.1"/>
    </source>
</evidence>
<accession>E7EKH3</accession>
<comment type="function">
    <text evidence="3">Antimicrobial peptide. Active against some Gram-negative and a variety of Gram-positive bacterial strains. Active against fungus C.glabrata 090902 but not against C.albicans ATCC 10231. Shows hemolytic activity against human erythrocytes.</text>
</comment>
<comment type="subcellular location">
    <subcellularLocation>
        <location evidence="5">Secreted</location>
    </subcellularLocation>
</comment>
<comment type="tissue specificity">
    <text evidence="5">Expressed by the skin glands.</text>
</comment>
<comment type="similarity">
    <text evidence="2">Belongs to the frog skin active peptide (FSAP) family. Brevinin subfamily.</text>
</comment>
<proteinExistence type="evidence at protein level"/>
<name>B2SN1_SYLSP</name>